<reference key="1">
    <citation type="submission" date="2005-09" db="EMBL/GenBank/DDBJ databases">
        <title>Complete sequence of chromosome 1 of Rhodobacter sphaeroides 2.4.1.</title>
        <authorList>
            <person name="Copeland A."/>
            <person name="Lucas S."/>
            <person name="Lapidus A."/>
            <person name="Barry K."/>
            <person name="Detter J.C."/>
            <person name="Glavina T."/>
            <person name="Hammon N."/>
            <person name="Israni S."/>
            <person name="Pitluck S."/>
            <person name="Richardson P."/>
            <person name="Mackenzie C."/>
            <person name="Choudhary M."/>
            <person name="Larimer F."/>
            <person name="Hauser L.J."/>
            <person name="Land M."/>
            <person name="Donohue T.J."/>
            <person name="Kaplan S."/>
        </authorList>
    </citation>
    <scope>NUCLEOTIDE SEQUENCE [LARGE SCALE GENOMIC DNA]</scope>
    <source>
        <strain>ATCC 17023 / DSM 158 / JCM 6121 / CCUG 31486 / LMG 2827 / NBRC 12203 / NCIMB 8253 / ATH 2.4.1.</strain>
    </source>
</reference>
<sequence>MTTVTRFAPSPTGYIHVGNLRTALMNWAIARKSGGTFILRLDDTDRERSKQEYSDGIMEDLEWLGLTWDRLERQSDRLDRYAEAADELRRAGRFYECFESPTELDLKRKKLLNMGKPPVYDRAALKLSDEERARLREERGGYWRFLLDQERIEWTDGILGPISIDAASVSDPVLIRADGQVLYTFASSVDDIDMGVTFIVRGGDHVTNTATQIQIMQALGGTPPSFAHHSLLTGAQGEALSKRLGTLSLRDLRARGVEPMALLSLMARLGSSQPVELFRTHEELLAGFDVGTFGAAPTKFDAEDLFPLTRHYVQGLPFEAVRGRIAALGVPDDLAEPFWRVAKDNIGVLEDLGGWWTLFSEGAEPQIDPEDEDFIRQAMTLLPPPPYGPESWAQFTAAVKEATGRKGKGLFMPLRKALTGQAHGPDMSEVMPLLQKVRAKG</sequence>
<comment type="function">
    <text evidence="1">Catalyzes the attachment of glutamate to tRNA(Glu) in a two-step reaction: glutamate is first activated by ATP to form Glu-AMP and then transferred to the acceptor end of tRNA(Glu).</text>
</comment>
<comment type="catalytic activity">
    <reaction evidence="1">
        <text>tRNA(Glu) + L-glutamate + ATP = L-glutamyl-tRNA(Glu) + AMP + diphosphate</text>
        <dbReference type="Rhea" id="RHEA:23540"/>
        <dbReference type="Rhea" id="RHEA-COMP:9663"/>
        <dbReference type="Rhea" id="RHEA-COMP:9680"/>
        <dbReference type="ChEBI" id="CHEBI:29985"/>
        <dbReference type="ChEBI" id="CHEBI:30616"/>
        <dbReference type="ChEBI" id="CHEBI:33019"/>
        <dbReference type="ChEBI" id="CHEBI:78442"/>
        <dbReference type="ChEBI" id="CHEBI:78520"/>
        <dbReference type="ChEBI" id="CHEBI:456215"/>
        <dbReference type="EC" id="6.1.1.17"/>
    </reaction>
</comment>
<comment type="subunit">
    <text evidence="1">Monomer.</text>
</comment>
<comment type="subcellular location">
    <subcellularLocation>
        <location evidence="1">Cytoplasm</location>
    </subcellularLocation>
</comment>
<comment type="similarity">
    <text evidence="1">Belongs to the class-I aminoacyl-tRNA synthetase family. Glutamate--tRNA ligase type 1 subfamily.</text>
</comment>
<feature type="chain" id="PRO_0000367744" description="Glutamate--tRNA ligase 2">
    <location>
        <begin position="1"/>
        <end position="441"/>
    </location>
</feature>
<feature type="short sequence motif" description="'HIGH' region" evidence="1">
    <location>
        <begin position="9"/>
        <end position="19"/>
    </location>
</feature>
<feature type="short sequence motif" description="'KMSKS' region" evidence="1">
    <location>
        <begin position="239"/>
        <end position="243"/>
    </location>
</feature>
<feature type="binding site" evidence="1">
    <location>
        <position position="242"/>
    </location>
    <ligand>
        <name>ATP</name>
        <dbReference type="ChEBI" id="CHEBI:30616"/>
    </ligand>
</feature>
<protein>
    <recommendedName>
        <fullName evidence="1">Glutamate--tRNA ligase 2</fullName>
        <ecNumber evidence="1">6.1.1.17</ecNumber>
    </recommendedName>
    <alternativeName>
        <fullName evidence="1">Glutamyl-tRNA synthetase 2</fullName>
        <shortName evidence="1">GluRS 2</shortName>
    </alternativeName>
</protein>
<keyword id="KW-0030">Aminoacyl-tRNA synthetase</keyword>
<keyword id="KW-0067">ATP-binding</keyword>
<keyword id="KW-0963">Cytoplasm</keyword>
<keyword id="KW-0436">Ligase</keyword>
<keyword id="KW-0547">Nucleotide-binding</keyword>
<keyword id="KW-0648">Protein biosynthesis</keyword>
<keyword id="KW-1185">Reference proteome</keyword>
<proteinExistence type="inferred from homology"/>
<dbReference type="EC" id="6.1.1.17" evidence="1"/>
<dbReference type="EMBL" id="CP000143">
    <property type="protein sequence ID" value="ABA79976.1"/>
    <property type="molecule type" value="Genomic_DNA"/>
</dbReference>
<dbReference type="RefSeq" id="WP_011338496.1">
    <property type="nucleotide sequence ID" value="NC_007493.2"/>
</dbReference>
<dbReference type="RefSeq" id="YP_353877.1">
    <property type="nucleotide sequence ID" value="NC_007493.2"/>
</dbReference>
<dbReference type="SMR" id="Q3IZQ8"/>
<dbReference type="STRING" id="272943.RSP_0797"/>
<dbReference type="EnsemblBacteria" id="ABA79976">
    <property type="protein sequence ID" value="ABA79976"/>
    <property type="gene ID" value="RSP_0797"/>
</dbReference>
<dbReference type="GeneID" id="3718415"/>
<dbReference type="KEGG" id="rsp:RSP_0797"/>
<dbReference type="PATRIC" id="fig|272943.9.peg.2757"/>
<dbReference type="eggNOG" id="COG0008">
    <property type="taxonomic scope" value="Bacteria"/>
</dbReference>
<dbReference type="OrthoDB" id="9807503at2"/>
<dbReference type="PhylomeDB" id="Q3IZQ8"/>
<dbReference type="Proteomes" id="UP000002703">
    <property type="component" value="Chromosome 1"/>
</dbReference>
<dbReference type="GO" id="GO:0005737">
    <property type="term" value="C:cytoplasm"/>
    <property type="evidence" value="ECO:0007669"/>
    <property type="project" value="UniProtKB-SubCell"/>
</dbReference>
<dbReference type="GO" id="GO:0005524">
    <property type="term" value="F:ATP binding"/>
    <property type="evidence" value="ECO:0007669"/>
    <property type="project" value="UniProtKB-UniRule"/>
</dbReference>
<dbReference type="GO" id="GO:0004818">
    <property type="term" value="F:glutamate-tRNA ligase activity"/>
    <property type="evidence" value="ECO:0007669"/>
    <property type="project" value="UniProtKB-UniRule"/>
</dbReference>
<dbReference type="GO" id="GO:0000049">
    <property type="term" value="F:tRNA binding"/>
    <property type="evidence" value="ECO:0007669"/>
    <property type="project" value="InterPro"/>
</dbReference>
<dbReference type="GO" id="GO:0006424">
    <property type="term" value="P:glutamyl-tRNA aminoacylation"/>
    <property type="evidence" value="ECO:0007669"/>
    <property type="project" value="UniProtKB-UniRule"/>
</dbReference>
<dbReference type="Gene3D" id="1.10.10.350">
    <property type="match status" value="1"/>
</dbReference>
<dbReference type="Gene3D" id="3.40.50.620">
    <property type="entry name" value="HUPs"/>
    <property type="match status" value="1"/>
</dbReference>
<dbReference type="HAMAP" id="MF_00022">
    <property type="entry name" value="Glu_tRNA_synth_type1"/>
    <property type="match status" value="1"/>
</dbReference>
<dbReference type="InterPro" id="IPR045462">
    <property type="entry name" value="aa-tRNA-synth_I_cd-bd"/>
</dbReference>
<dbReference type="InterPro" id="IPR020751">
    <property type="entry name" value="aa-tRNA-synth_I_codon-bd_sub2"/>
</dbReference>
<dbReference type="InterPro" id="IPR001412">
    <property type="entry name" value="aa-tRNA-synth_I_CS"/>
</dbReference>
<dbReference type="InterPro" id="IPR008925">
    <property type="entry name" value="aa_tRNA-synth_I_cd-bd_sf"/>
</dbReference>
<dbReference type="InterPro" id="IPR004527">
    <property type="entry name" value="Glu-tRNA-ligase_bac/mito"/>
</dbReference>
<dbReference type="InterPro" id="IPR000924">
    <property type="entry name" value="Glu/Gln-tRNA-synth"/>
</dbReference>
<dbReference type="InterPro" id="IPR020058">
    <property type="entry name" value="Glu/Gln-tRNA-synth_Ib_cat-dom"/>
</dbReference>
<dbReference type="InterPro" id="IPR049940">
    <property type="entry name" value="GluQ/Sye"/>
</dbReference>
<dbReference type="InterPro" id="IPR014729">
    <property type="entry name" value="Rossmann-like_a/b/a_fold"/>
</dbReference>
<dbReference type="NCBIfam" id="TIGR00464">
    <property type="entry name" value="gltX_bact"/>
    <property type="match status" value="1"/>
</dbReference>
<dbReference type="PANTHER" id="PTHR43311">
    <property type="entry name" value="GLUTAMATE--TRNA LIGASE"/>
    <property type="match status" value="1"/>
</dbReference>
<dbReference type="PANTHER" id="PTHR43311:SF2">
    <property type="entry name" value="GLUTAMATE--TRNA LIGASE, MITOCHONDRIAL-RELATED"/>
    <property type="match status" value="1"/>
</dbReference>
<dbReference type="Pfam" id="PF19269">
    <property type="entry name" value="Anticodon_2"/>
    <property type="match status" value="1"/>
</dbReference>
<dbReference type="Pfam" id="PF00749">
    <property type="entry name" value="tRNA-synt_1c"/>
    <property type="match status" value="1"/>
</dbReference>
<dbReference type="PRINTS" id="PR00987">
    <property type="entry name" value="TRNASYNTHGLU"/>
</dbReference>
<dbReference type="SUPFAM" id="SSF48163">
    <property type="entry name" value="An anticodon-binding domain of class I aminoacyl-tRNA synthetases"/>
    <property type="match status" value="1"/>
</dbReference>
<dbReference type="SUPFAM" id="SSF52374">
    <property type="entry name" value="Nucleotidylyl transferase"/>
    <property type="match status" value="1"/>
</dbReference>
<dbReference type="PROSITE" id="PS00178">
    <property type="entry name" value="AA_TRNA_LIGASE_I"/>
    <property type="match status" value="1"/>
</dbReference>
<evidence type="ECO:0000255" key="1">
    <source>
        <dbReference type="HAMAP-Rule" id="MF_00022"/>
    </source>
</evidence>
<accession>Q3IZQ8</accession>
<name>SYE2_CERS4</name>
<gene>
    <name evidence="1" type="primary">gltX2</name>
    <name type="ordered locus">RHOS4_24080</name>
    <name type="ORF">RSP_0797</name>
</gene>
<organism>
    <name type="scientific">Cereibacter sphaeroides (strain ATCC 17023 / DSM 158 / JCM 6121 / CCUG 31486 / LMG 2827 / NBRC 12203 / NCIMB 8253 / ATH 2.4.1.)</name>
    <name type="common">Rhodobacter sphaeroides</name>
    <dbReference type="NCBI Taxonomy" id="272943"/>
    <lineage>
        <taxon>Bacteria</taxon>
        <taxon>Pseudomonadati</taxon>
        <taxon>Pseudomonadota</taxon>
        <taxon>Alphaproteobacteria</taxon>
        <taxon>Rhodobacterales</taxon>
        <taxon>Paracoccaceae</taxon>
        <taxon>Cereibacter</taxon>
    </lineage>
</organism>